<gene>
    <name type="ordered locus">ECA2523</name>
</gene>
<proteinExistence type="inferred from homology"/>
<comment type="similarity">
    <text evidence="1">Belongs to the UPF0502 family.</text>
</comment>
<sequence>MKYQLDAREARVIGCMLEKQITTPDQYPMSLNSITTACNQKTNREPVTELSESEVQQTLDLLVKKHFLRTLSGFGNRVVKYEHRFCNSEFGDLKLSPAEVALVTTLLLRGPQTPGELRTRAARLYDFSDVGEAESTLDQLQQRDDGPFVVRLAREAGKRESRYRHLFSGEASDAAVLEEESVNDNSHPLAERVEALETEVAELKRQLAALLA</sequence>
<keyword id="KW-1185">Reference proteome</keyword>
<name>Y2523_PECAS</name>
<accession>Q6D471</accession>
<dbReference type="EMBL" id="BX950851">
    <property type="protein sequence ID" value="CAG75422.1"/>
    <property type="molecule type" value="Genomic_DNA"/>
</dbReference>
<dbReference type="RefSeq" id="WP_011094068.1">
    <property type="nucleotide sequence ID" value="NC_004547.2"/>
</dbReference>
<dbReference type="SMR" id="Q6D471"/>
<dbReference type="STRING" id="218491.ECA2523"/>
<dbReference type="KEGG" id="eca:ECA2523"/>
<dbReference type="PATRIC" id="fig|218491.5.peg.2553"/>
<dbReference type="eggNOG" id="COG3132">
    <property type="taxonomic scope" value="Bacteria"/>
</dbReference>
<dbReference type="HOGENOM" id="CLU_057831_2_0_6"/>
<dbReference type="OrthoDB" id="9784785at2"/>
<dbReference type="Proteomes" id="UP000007966">
    <property type="component" value="Chromosome"/>
</dbReference>
<dbReference type="Gene3D" id="1.10.10.10">
    <property type="entry name" value="Winged helix-like DNA-binding domain superfamily/Winged helix DNA-binding domain"/>
    <property type="match status" value="2"/>
</dbReference>
<dbReference type="HAMAP" id="MF_01584">
    <property type="entry name" value="UPF0502"/>
    <property type="match status" value="1"/>
</dbReference>
<dbReference type="InterPro" id="IPR007432">
    <property type="entry name" value="DUF480"/>
</dbReference>
<dbReference type="InterPro" id="IPR036388">
    <property type="entry name" value="WH-like_DNA-bd_sf"/>
</dbReference>
<dbReference type="InterPro" id="IPR036390">
    <property type="entry name" value="WH_DNA-bd_sf"/>
</dbReference>
<dbReference type="NCBIfam" id="NF008413">
    <property type="entry name" value="PRK11239.1"/>
    <property type="match status" value="1"/>
</dbReference>
<dbReference type="PANTHER" id="PTHR38768">
    <property type="entry name" value="UPF0502 PROTEIN YCEH"/>
    <property type="match status" value="1"/>
</dbReference>
<dbReference type="PANTHER" id="PTHR38768:SF1">
    <property type="entry name" value="UPF0502 PROTEIN YCEH"/>
    <property type="match status" value="1"/>
</dbReference>
<dbReference type="Pfam" id="PF04337">
    <property type="entry name" value="DUF480"/>
    <property type="match status" value="1"/>
</dbReference>
<dbReference type="SUPFAM" id="SSF46785">
    <property type="entry name" value="Winged helix' DNA-binding domain"/>
    <property type="match status" value="2"/>
</dbReference>
<feature type="chain" id="PRO_0000309384" description="UPF0502 protein ECA2523">
    <location>
        <begin position="1"/>
        <end position="212"/>
    </location>
</feature>
<organism>
    <name type="scientific">Pectobacterium atrosepticum (strain SCRI 1043 / ATCC BAA-672)</name>
    <name type="common">Erwinia carotovora subsp. atroseptica</name>
    <dbReference type="NCBI Taxonomy" id="218491"/>
    <lineage>
        <taxon>Bacteria</taxon>
        <taxon>Pseudomonadati</taxon>
        <taxon>Pseudomonadota</taxon>
        <taxon>Gammaproteobacteria</taxon>
        <taxon>Enterobacterales</taxon>
        <taxon>Pectobacteriaceae</taxon>
        <taxon>Pectobacterium</taxon>
    </lineage>
</organism>
<evidence type="ECO:0000255" key="1">
    <source>
        <dbReference type="HAMAP-Rule" id="MF_01584"/>
    </source>
</evidence>
<protein>
    <recommendedName>
        <fullName evidence="1">UPF0502 protein ECA2523</fullName>
    </recommendedName>
</protein>
<reference key="1">
    <citation type="journal article" date="2004" name="Proc. Natl. Acad. Sci. U.S.A.">
        <title>Genome sequence of the enterobacterial phytopathogen Erwinia carotovora subsp. atroseptica and characterization of virulence factors.</title>
        <authorList>
            <person name="Bell K.S."/>
            <person name="Sebaihia M."/>
            <person name="Pritchard L."/>
            <person name="Holden M.T.G."/>
            <person name="Hyman L.J."/>
            <person name="Holeva M.C."/>
            <person name="Thomson N.R."/>
            <person name="Bentley S.D."/>
            <person name="Churcher L.J.C."/>
            <person name="Mungall K."/>
            <person name="Atkin R."/>
            <person name="Bason N."/>
            <person name="Brooks K."/>
            <person name="Chillingworth T."/>
            <person name="Clark K."/>
            <person name="Doggett J."/>
            <person name="Fraser A."/>
            <person name="Hance Z."/>
            <person name="Hauser H."/>
            <person name="Jagels K."/>
            <person name="Moule S."/>
            <person name="Norbertczak H."/>
            <person name="Ormond D."/>
            <person name="Price C."/>
            <person name="Quail M.A."/>
            <person name="Sanders M."/>
            <person name="Walker D."/>
            <person name="Whitehead S."/>
            <person name="Salmond G.P.C."/>
            <person name="Birch P.R.J."/>
            <person name="Parkhill J."/>
            <person name="Toth I.K."/>
        </authorList>
    </citation>
    <scope>NUCLEOTIDE SEQUENCE [LARGE SCALE GENOMIC DNA]</scope>
    <source>
        <strain>SCRI 1043 / ATCC BAA-672</strain>
    </source>
</reference>